<gene>
    <name evidence="1" type="primary">rplB</name>
    <name type="ordered locus">BOV_1193</name>
</gene>
<proteinExistence type="inferred from homology"/>
<keyword id="KW-0687">Ribonucleoprotein</keyword>
<keyword id="KW-0689">Ribosomal protein</keyword>
<keyword id="KW-0694">RNA-binding</keyword>
<keyword id="KW-0699">rRNA-binding</keyword>
<feature type="chain" id="PRO_0000309878" description="Large ribosomal subunit protein uL2">
    <location>
        <begin position="1"/>
        <end position="277"/>
    </location>
</feature>
<feature type="region of interest" description="Disordered" evidence="2">
    <location>
        <begin position="222"/>
        <end position="277"/>
    </location>
</feature>
<accession>A5VR03</accession>
<comment type="function">
    <text evidence="1">One of the primary rRNA binding proteins. Required for association of the 30S and 50S subunits to form the 70S ribosome, for tRNA binding and peptide bond formation. It has been suggested to have peptidyltransferase activity; this is somewhat controversial. Makes several contacts with the 16S rRNA in the 70S ribosome.</text>
</comment>
<comment type="subunit">
    <text evidence="1">Part of the 50S ribosomal subunit. Forms a bridge to the 30S subunit in the 70S ribosome.</text>
</comment>
<comment type="similarity">
    <text evidence="1">Belongs to the universal ribosomal protein uL2 family.</text>
</comment>
<organism>
    <name type="scientific">Brucella ovis (strain ATCC 25840 / 63/290 / NCTC 10512)</name>
    <dbReference type="NCBI Taxonomy" id="444178"/>
    <lineage>
        <taxon>Bacteria</taxon>
        <taxon>Pseudomonadati</taxon>
        <taxon>Pseudomonadota</taxon>
        <taxon>Alphaproteobacteria</taxon>
        <taxon>Hyphomicrobiales</taxon>
        <taxon>Brucellaceae</taxon>
        <taxon>Brucella/Ochrobactrum group</taxon>
        <taxon>Brucella</taxon>
    </lineage>
</organism>
<dbReference type="EMBL" id="CP000708">
    <property type="protein sequence ID" value="ABQ60690.1"/>
    <property type="molecule type" value="Genomic_DNA"/>
</dbReference>
<dbReference type="RefSeq" id="WP_006012789.1">
    <property type="nucleotide sequence ID" value="NC_009505.1"/>
</dbReference>
<dbReference type="SMR" id="A5VR03"/>
<dbReference type="GeneID" id="45124598"/>
<dbReference type="KEGG" id="bov:BOV_1193"/>
<dbReference type="HOGENOM" id="CLU_036235_2_1_5"/>
<dbReference type="PhylomeDB" id="A5VR03"/>
<dbReference type="Proteomes" id="UP000006383">
    <property type="component" value="Chromosome I"/>
</dbReference>
<dbReference type="GO" id="GO:0015934">
    <property type="term" value="C:large ribosomal subunit"/>
    <property type="evidence" value="ECO:0007669"/>
    <property type="project" value="InterPro"/>
</dbReference>
<dbReference type="GO" id="GO:0019843">
    <property type="term" value="F:rRNA binding"/>
    <property type="evidence" value="ECO:0007669"/>
    <property type="project" value="UniProtKB-UniRule"/>
</dbReference>
<dbReference type="GO" id="GO:0003735">
    <property type="term" value="F:structural constituent of ribosome"/>
    <property type="evidence" value="ECO:0007669"/>
    <property type="project" value="InterPro"/>
</dbReference>
<dbReference type="GO" id="GO:0016740">
    <property type="term" value="F:transferase activity"/>
    <property type="evidence" value="ECO:0007669"/>
    <property type="project" value="InterPro"/>
</dbReference>
<dbReference type="GO" id="GO:0002181">
    <property type="term" value="P:cytoplasmic translation"/>
    <property type="evidence" value="ECO:0007669"/>
    <property type="project" value="TreeGrafter"/>
</dbReference>
<dbReference type="FunFam" id="2.30.30.30:FF:000055">
    <property type="entry name" value="50S ribosomal protein L2"/>
    <property type="match status" value="1"/>
</dbReference>
<dbReference type="FunFam" id="2.40.50.140:FF:000003">
    <property type="entry name" value="50S ribosomal protein L2"/>
    <property type="match status" value="1"/>
</dbReference>
<dbReference type="FunFam" id="4.10.950.10:FF:000001">
    <property type="entry name" value="50S ribosomal protein L2"/>
    <property type="match status" value="1"/>
</dbReference>
<dbReference type="Gene3D" id="2.30.30.30">
    <property type="match status" value="1"/>
</dbReference>
<dbReference type="Gene3D" id="2.40.50.140">
    <property type="entry name" value="Nucleic acid-binding proteins"/>
    <property type="match status" value="1"/>
</dbReference>
<dbReference type="Gene3D" id="4.10.950.10">
    <property type="entry name" value="Ribosomal protein L2, domain 3"/>
    <property type="match status" value="1"/>
</dbReference>
<dbReference type="HAMAP" id="MF_01320_B">
    <property type="entry name" value="Ribosomal_uL2_B"/>
    <property type="match status" value="1"/>
</dbReference>
<dbReference type="InterPro" id="IPR012340">
    <property type="entry name" value="NA-bd_OB-fold"/>
</dbReference>
<dbReference type="InterPro" id="IPR014722">
    <property type="entry name" value="Rib_uL2_dom2"/>
</dbReference>
<dbReference type="InterPro" id="IPR002171">
    <property type="entry name" value="Ribosomal_uL2"/>
</dbReference>
<dbReference type="InterPro" id="IPR005880">
    <property type="entry name" value="Ribosomal_uL2_bac/org-type"/>
</dbReference>
<dbReference type="InterPro" id="IPR022669">
    <property type="entry name" value="Ribosomal_uL2_C"/>
</dbReference>
<dbReference type="InterPro" id="IPR022671">
    <property type="entry name" value="Ribosomal_uL2_CS"/>
</dbReference>
<dbReference type="InterPro" id="IPR014726">
    <property type="entry name" value="Ribosomal_uL2_dom3"/>
</dbReference>
<dbReference type="InterPro" id="IPR022666">
    <property type="entry name" value="Ribosomal_uL2_RNA-bd_dom"/>
</dbReference>
<dbReference type="InterPro" id="IPR008991">
    <property type="entry name" value="Translation_prot_SH3-like_sf"/>
</dbReference>
<dbReference type="NCBIfam" id="TIGR01171">
    <property type="entry name" value="rplB_bact"/>
    <property type="match status" value="1"/>
</dbReference>
<dbReference type="PANTHER" id="PTHR13691:SF5">
    <property type="entry name" value="LARGE RIBOSOMAL SUBUNIT PROTEIN UL2M"/>
    <property type="match status" value="1"/>
</dbReference>
<dbReference type="PANTHER" id="PTHR13691">
    <property type="entry name" value="RIBOSOMAL PROTEIN L2"/>
    <property type="match status" value="1"/>
</dbReference>
<dbReference type="Pfam" id="PF00181">
    <property type="entry name" value="Ribosomal_L2"/>
    <property type="match status" value="1"/>
</dbReference>
<dbReference type="Pfam" id="PF03947">
    <property type="entry name" value="Ribosomal_L2_C"/>
    <property type="match status" value="1"/>
</dbReference>
<dbReference type="PIRSF" id="PIRSF002158">
    <property type="entry name" value="Ribosomal_L2"/>
    <property type="match status" value="1"/>
</dbReference>
<dbReference type="SMART" id="SM01383">
    <property type="entry name" value="Ribosomal_L2"/>
    <property type="match status" value="1"/>
</dbReference>
<dbReference type="SMART" id="SM01382">
    <property type="entry name" value="Ribosomal_L2_C"/>
    <property type="match status" value="1"/>
</dbReference>
<dbReference type="SUPFAM" id="SSF50249">
    <property type="entry name" value="Nucleic acid-binding proteins"/>
    <property type="match status" value="1"/>
</dbReference>
<dbReference type="SUPFAM" id="SSF50104">
    <property type="entry name" value="Translation proteins SH3-like domain"/>
    <property type="match status" value="1"/>
</dbReference>
<dbReference type="PROSITE" id="PS00467">
    <property type="entry name" value="RIBOSOMAL_L2"/>
    <property type="match status" value="1"/>
</dbReference>
<name>RL2_BRUO2</name>
<evidence type="ECO:0000255" key="1">
    <source>
        <dbReference type="HAMAP-Rule" id="MF_01320"/>
    </source>
</evidence>
<evidence type="ECO:0000256" key="2">
    <source>
        <dbReference type="SAM" id="MobiDB-lite"/>
    </source>
</evidence>
<evidence type="ECO:0000305" key="3"/>
<sequence>MALKHFNPITPGQRQLVIVDRSELYKGKPVKSLTEGLSKKGGRNNTGRITVRFQGGGHKRSYRFIDFKRRKLDVVGTVERLEYDPNRTAFIALIRYTDGELAYILAPQRLAVGDQVVAGNFVDVKPGNAMPLSSMPVGTIIHNVELKPGKGGQIARSAGTYAQLVGRDQGMAILRLNSGEQRLVSGACFASVGAVSNPDHGNINDGKAGRSVWRGKRPHVRGVAMNPVDHPHGGGEGRTSGGRHPVTPWGKPTKGKKTRSNKATDKFIMRSRHQRKK</sequence>
<protein>
    <recommendedName>
        <fullName evidence="1">Large ribosomal subunit protein uL2</fullName>
    </recommendedName>
    <alternativeName>
        <fullName evidence="3">50S ribosomal protein L2</fullName>
    </alternativeName>
</protein>
<reference key="1">
    <citation type="journal article" date="2009" name="PLoS ONE">
        <title>Genome degradation in Brucella ovis corresponds with narrowing of its host range and tissue tropism.</title>
        <authorList>
            <person name="Tsolis R.M."/>
            <person name="Seshadri R."/>
            <person name="Santos R.L."/>
            <person name="Sangari F.J."/>
            <person name="Lobo J.M."/>
            <person name="de Jong M.F."/>
            <person name="Ren Q."/>
            <person name="Myers G."/>
            <person name="Brinkac L.M."/>
            <person name="Nelson W.C."/>
            <person name="Deboy R.T."/>
            <person name="Angiuoli S."/>
            <person name="Khouri H."/>
            <person name="Dimitrov G."/>
            <person name="Robinson J.R."/>
            <person name="Mulligan S."/>
            <person name="Walker R.L."/>
            <person name="Elzer P.E."/>
            <person name="Hassan K.A."/>
            <person name="Paulsen I.T."/>
        </authorList>
    </citation>
    <scope>NUCLEOTIDE SEQUENCE [LARGE SCALE GENOMIC DNA]</scope>
    <source>
        <strain>ATCC 25840 / 63/290 / NCTC 10512</strain>
    </source>
</reference>